<organism>
    <name type="scientific">Fusarium culmorum</name>
    <dbReference type="NCBI Taxonomy" id="5516"/>
    <lineage>
        <taxon>Eukaryota</taxon>
        <taxon>Fungi</taxon>
        <taxon>Dikarya</taxon>
        <taxon>Ascomycota</taxon>
        <taxon>Pezizomycotina</taxon>
        <taxon>Sordariomycetes</taxon>
        <taxon>Hypocreomycetidae</taxon>
        <taxon>Hypocreales</taxon>
        <taxon>Nectriaceae</taxon>
        <taxon>Fusarium</taxon>
    </lineage>
</organism>
<dbReference type="EC" id="2.7.11.24" evidence="2"/>
<dbReference type="EMBL" id="DQ065608">
    <property type="protein sequence ID" value="AAY63969.1"/>
    <property type="molecule type" value="Genomic_DNA"/>
</dbReference>
<dbReference type="SMR" id="Q4PNJ1"/>
<dbReference type="GO" id="GO:0005737">
    <property type="term" value="C:cytoplasm"/>
    <property type="evidence" value="ECO:0007669"/>
    <property type="project" value="UniProtKB-SubCell"/>
</dbReference>
<dbReference type="GO" id="GO:0005634">
    <property type="term" value="C:nucleus"/>
    <property type="evidence" value="ECO:0007669"/>
    <property type="project" value="UniProtKB-SubCell"/>
</dbReference>
<dbReference type="GO" id="GO:0005524">
    <property type="term" value="F:ATP binding"/>
    <property type="evidence" value="ECO:0007669"/>
    <property type="project" value="UniProtKB-KW"/>
</dbReference>
<dbReference type="GO" id="GO:0004707">
    <property type="term" value="F:MAP kinase activity"/>
    <property type="evidence" value="ECO:0007669"/>
    <property type="project" value="UniProtKB-EC"/>
</dbReference>
<dbReference type="GO" id="GO:0106310">
    <property type="term" value="F:protein serine kinase activity"/>
    <property type="evidence" value="ECO:0007669"/>
    <property type="project" value="RHEA"/>
</dbReference>
<dbReference type="FunFam" id="1.10.510.10:FF:000049">
    <property type="entry name" value="Mitogen-activated protein kinase"/>
    <property type="match status" value="1"/>
</dbReference>
<dbReference type="Gene3D" id="3.30.200.20">
    <property type="entry name" value="Phosphorylase Kinase, domain 1"/>
    <property type="match status" value="1"/>
</dbReference>
<dbReference type="Gene3D" id="1.10.510.10">
    <property type="entry name" value="Transferase(Phosphotransferase) domain 1"/>
    <property type="match status" value="1"/>
</dbReference>
<dbReference type="InterPro" id="IPR011009">
    <property type="entry name" value="Kinase-like_dom_sf"/>
</dbReference>
<dbReference type="InterPro" id="IPR050117">
    <property type="entry name" value="MAP_kinase"/>
</dbReference>
<dbReference type="InterPro" id="IPR003527">
    <property type="entry name" value="MAP_kinase_CS"/>
</dbReference>
<dbReference type="InterPro" id="IPR000719">
    <property type="entry name" value="Prot_kinase_dom"/>
</dbReference>
<dbReference type="InterPro" id="IPR008271">
    <property type="entry name" value="Ser/Thr_kinase_AS"/>
</dbReference>
<dbReference type="PANTHER" id="PTHR24055">
    <property type="entry name" value="MITOGEN-ACTIVATED PROTEIN KINASE"/>
    <property type="match status" value="1"/>
</dbReference>
<dbReference type="Pfam" id="PF00069">
    <property type="entry name" value="Pkinase"/>
    <property type="match status" value="1"/>
</dbReference>
<dbReference type="SMART" id="SM00220">
    <property type="entry name" value="S_TKc"/>
    <property type="match status" value="1"/>
</dbReference>
<dbReference type="SUPFAM" id="SSF56112">
    <property type="entry name" value="Protein kinase-like (PK-like)"/>
    <property type="match status" value="1"/>
</dbReference>
<dbReference type="PROSITE" id="PS01351">
    <property type="entry name" value="MAPK"/>
    <property type="match status" value="1"/>
</dbReference>
<dbReference type="PROSITE" id="PS50011">
    <property type="entry name" value="PROTEIN_KINASE_DOM"/>
    <property type="match status" value="1"/>
</dbReference>
<dbReference type="PROSITE" id="PS00108">
    <property type="entry name" value="PROTEIN_KINASE_ST"/>
    <property type="match status" value="1"/>
</dbReference>
<reference key="1">
    <citation type="journal article" date="2005" name="Acta Phytopathol. Entomol. Hung.">
        <title>Identification of new molecular hallmarks for YSAPK MAPKs: application for cloning strategies in different fungal filamentous species.</title>
        <authorList>
            <person name="Adam A.L."/>
            <person name="Kohut G."/>
            <person name="Laday M."/>
        </authorList>
    </citation>
    <scope>NUCLEOTIDE SEQUENCE [GENOMIC DNA]</scope>
    <source>
        <strain>ITEM 628</strain>
    </source>
</reference>
<reference key="2">
    <citation type="submission" date="2005-05" db="EMBL/GenBank/DDBJ databases">
        <title>MAP kinase, fcmk1 from Fusarium culmorum is similar to Hog1 YSAPK (yeast and fungal stress activated protein kinase).</title>
        <authorList>
            <person name="Kohut G."/>
            <person name="Adam A.L."/>
            <person name="Hornok L."/>
        </authorList>
    </citation>
    <scope>NUCLEOTIDE SEQUENCE [GENOMIC DNA]</scope>
    <source>
        <strain>ITEM 628</strain>
    </source>
</reference>
<proteinExistence type="inferred from homology"/>
<name>HOG1_FUSCU</name>
<protein>
    <recommendedName>
        <fullName>Mitogen-activated protein kinase HOG1</fullName>
        <shortName>MAP kinase HOG1</shortName>
        <ecNumber evidence="2">2.7.11.24</ecNumber>
    </recommendedName>
</protein>
<evidence type="ECO:0000250" key="1"/>
<evidence type="ECO:0000250" key="2">
    <source>
        <dbReference type="UniProtKB" id="P32485"/>
    </source>
</evidence>
<evidence type="ECO:0000250" key="3">
    <source>
        <dbReference type="UniProtKB" id="Q16539"/>
    </source>
</evidence>
<evidence type="ECO:0000250" key="4">
    <source>
        <dbReference type="UniProtKB" id="Q4WSF6"/>
    </source>
</evidence>
<evidence type="ECO:0000255" key="5">
    <source>
        <dbReference type="PROSITE-ProRule" id="PRU00159"/>
    </source>
</evidence>
<evidence type="ECO:0000255" key="6">
    <source>
        <dbReference type="PROSITE-ProRule" id="PRU10027"/>
    </source>
</evidence>
<keyword id="KW-0010">Activator</keyword>
<keyword id="KW-0067">ATP-binding</keyword>
<keyword id="KW-0963">Cytoplasm</keyword>
<keyword id="KW-0418">Kinase</keyword>
<keyword id="KW-0547">Nucleotide-binding</keyword>
<keyword id="KW-0539">Nucleus</keyword>
<keyword id="KW-0597">Phosphoprotein</keyword>
<keyword id="KW-0723">Serine/threonine-protein kinase</keyword>
<keyword id="KW-0804">Transcription</keyword>
<keyword id="KW-0805">Transcription regulation</keyword>
<keyword id="KW-0808">Transferase</keyword>
<gene>
    <name type="primary">HOG1</name>
</gene>
<comment type="function">
    <text evidence="4">Proline-directed serine/threonine-protein kinase involved in a signal transduction pathway that is activated by changes in the osmolarity of the extracellular environment. Controls osmotic regulation of transcription of target genes.</text>
</comment>
<comment type="catalytic activity">
    <reaction evidence="2">
        <text>L-seryl-[protein] + ATP = O-phospho-L-seryl-[protein] + ADP + H(+)</text>
        <dbReference type="Rhea" id="RHEA:17989"/>
        <dbReference type="Rhea" id="RHEA-COMP:9863"/>
        <dbReference type="Rhea" id="RHEA-COMP:11604"/>
        <dbReference type="ChEBI" id="CHEBI:15378"/>
        <dbReference type="ChEBI" id="CHEBI:29999"/>
        <dbReference type="ChEBI" id="CHEBI:30616"/>
        <dbReference type="ChEBI" id="CHEBI:83421"/>
        <dbReference type="ChEBI" id="CHEBI:456216"/>
        <dbReference type="EC" id="2.7.11.24"/>
    </reaction>
    <physiologicalReaction direction="left-to-right" evidence="2">
        <dbReference type="Rhea" id="RHEA:17990"/>
    </physiologicalReaction>
</comment>
<comment type="catalytic activity">
    <reaction evidence="2">
        <text>L-threonyl-[protein] + ATP = O-phospho-L-threonyl-[protein] + ADP + H(+)</text>
        <dbReference type="Rhea" id="RHEA:46608"/>
        <dbReference type="Rhea" id="RHEA-COMP:11060"/>
        <dbReference type="Rhea" id="RHEA-COMP:11605"/>
        <dbReference type="ChEBI" id="CHEBI:15378"/>
        <dbReference type="ChEBI" id="CHEBI:30013"/>
        <dbReference type="ChEBI" id="CHEBI:30616"/>
        <dbReference type="ChEBI" id="CHEBI:61977"/>
        <dbReference type="ChEBI" id="CHEBI:456216"/>
        <dbReference type="EC" id="2.7.11.24"/>
    </reaction>
    <physiologicalReaction direction="left-to-right" evidence="2">
        <dbReference type="Rhea" id="RHEA:46609"/>
    </physiologicalReaction>
</comment>
<comment type="cofactor">
    <cofactor evidence="3">
        <name>Mg(2+)</name>
        <dbReference type="ChEBI" id="CHEBI:18420"/>
    </cofactor>
</comment>
<comment type="activity regulation">
    <text evidence="1">Activated by tyrosine and threonine phosphorylation.</text>
</comment>
<comment type="subcellular location">
    <subcellularLocation>
        <location evidence="1">Cytoplasm</location>
    </subcellularLocation>
    <subcellularLocation>
        <location evidence="1">Nucleus</location>
    </subcellularLocation>
</comment>
<comment type="domain">
    <text>The TXY motif contains the threonine and tyrosine residues whose phosphorylation activates the MAP kinases.</text>
</comment>
<comment type="PTM">
    <text evidence="1">Dually phosphorylated on Thr-126 and Tyr-128, which activates the enzyme.</text>
</comment>
<comment type="similarity">
    <text evidence="5">Belongs to the protein kinase superfamily. Ser/Thr protein kinase family. MAP kinase subfamily. HOG1 sub-subfamily.</text>
</comment>
<feature type="chain" id="PRO_0000289689" description="Mitogen-activated protein kinase HOG1">
    <location>
        <begin position="1" status="less than"/>
        <end position="207" status="greater than"/>
    </location>
</feature>
<feature type="domain" description="Protein kinase" evidence="5">
    <location>
        <begin position="1" status="less than"/>
        <end position="207" status="greater than"/>
    </location>
</feature>
<feature type="short sequence motif" description="TXY">
    <location>
        <begin position="126"/>
        <end position="128"/>
    </location>
</feature>
<feature type="active site" description="Proton acceptor" evidence="5 6">
    <location>
        <position position="96"/>
    </location>
</feature>
<feature type="binding site" evidence="5">
    <location>
        <position position="4"/>
    </location>
    <ligand>
        <name>ATP</name>
        <dbReference type="ChEBI" id="CHEBI:30616"/>
    </ligand>
</feature>
<feature type="modified residue" description="Phosphothreonine" evidence="1">
    <location>
        <position position="126"/>
    </location>
</feature>
<feature type="modified residue" description="Phosphotyrosine" evidence="1">
    <location>
        <position position="128"/>
    </location>
</feature>
<feature type="non-terminal residue">
    <location>
        <position position="1"/>
    </location>
</feature>
<feature type="non-terminal residue">
    <location>
        <position position="207"/>
    </location>
</feature>
<sequence>VAVKKIMKPFSTPVLAKRTYRELKLLKHLKHENVISLSDIFISPLEDIYFVTELLGTDLHRLLTSRPLEKQFIQYFLYQIMRGLKYVHSAGVVHRDLKPSNILVNENCDLKICDFGLARIQDPQMTGYVSTRYYRAPEIMLTWQKYDVEVDIWSAGCIFAEMLEGKPLFPGKDHVNQFSIITELLGTPPDDVINTIASENTLRFVKS</sequence>
<accession>Q4PNJ1</accession>